<comment type="function">
    <text evidence="2">Catalyzes the reversible phosphorolytic breakdown of the N-glycosidic bond in the beta-(deoxy)ribonucleoside molecules, with the formation of the corresponding free purine bases and pentose-1-phosphate.</text>
</comment>
<comment type="catalytic activity">
    <reaction evidence="2">
        <text>a purine D-ribonucleoside + phosphate = a purine nucleobase + alpha-D-ribose 1-phosphate</text>
        <dbReference type="Rhea" id="RHEA:19805"/>
        <dbReference type="ChEBI" id="CHEBI:26386"/>
        <dbReference type="ChEBI" id="CHEBI:43474"/>
        <dbReference type="ChEBI" id="CHEBI:57720"/>
        <dbReference type="ChEBI" id="CHEBI:142355"/>
        <dbReference type="EC" id="2.4.2.1"/>
    </reaction>
</comment>
<comment type="catalytic activity">
    <reaction evidence="2">
        <text>a purine 2'-deoxy-D-ribonucleoside + phosphate = a purine nucleobase + 2-deoxy-alpha-D-ribose 1-phosphate</text>
        <dbReference type="Rhea" id="RHEA:36431"/>
        <dbReference type="ChEBI" id="CHEBI:26386"/>
        <dbReference type="ChEBI" id="CHEBI:43474"/>
        <dbReference type="ChEBI" id="CHEBI:57259"/>
        <dbReference type="ChEBI" id="CHEBI:142361"/>
        <dbReference type="EC" id="2.4.2.1"/>
    </reaction>
</comment>
<comment type="subunit">
    <text evidence="2">Homohexamer; trimer of homodimers.</text>
</comment>
<comment type="similarity">
    <text evidence="2">Belongs to the PNP/UDP phosphorylase family.</text>
</comment>
<proteinExistence type="inferred from homology"/>
<organism>
    <name type="scientific">Lacticaseibacillus casei (strain BL23)</name>
    <name type="common">Lactobacillus casei</name>
    <dbReference type="NCBI Taxonomy" id="543734"/>
    <lineage>
        <taxon>Bacteria</taxon>
        <taxon>Bacillati</taxon>
        <taxon>Bacillota</taxon>
        <taxon>Bacilli</taxon>
        <taxon>Lactobacillales</taxon>
        <taxon>Lactobacillaceae</taxon>
        <taxon>Lacticaseibacillus</taxon>
    </lineage>
</organism>
<keyword id="KW-0328">Glycosyltransferase</keyword>
<keyword id="KW-0808">Transferase</keyword>
<accession>B3W8N4</accession>
<sequence length="238" mass="25891">MSTHIDAPKGAIADVVLLPGDPLRAQYIAENFLDNAQRYNTVRNAFGFTGTFEGRRVSVQATGMGIPSISIYVNELIQDYGVKTLIRVGTAGGMGENVKVRDVVLAQGSSTDSSIILNTFGAGLYFAPLADFNLLREAANLADTSAIRYHVGNVLGEDRFYNDEMDRQKLIDYEVLATEMETPALYLLAAKYHVHALSILTVSNHLVTGEETSAQERQTSFNDMIGLALGVAKTVPDR</sequence>
<protein>
    <recommendedName>
        <fullName evidence="2">Purine nucleoside phosphorylase DeoD-type</fullName>
        <shortName evidence="2">PNP</shortName>
        <ecNumber evidence="2">2.4.2.1</ecNumber>
    </recommendedName>
</protein>
<dbReference type="EC" id="2.4.2.1" evidence="2"/>
<dbReference type="EMBL" id="FM177140">
    <property type="protein sequence ID" value="CAQ65402.1"/>
    <property type="molecule type" value="Genomic_DNA"/>
</dbReference>
<dbReference type="SMR" id="B3W8N4"/>
<dbReference type="KEGG" id="lcb:LCABL_02760"/>
<dbReference type="HOGENOM" id="CLU_068457_2_0_9"/>
<dbReference type="GO" id="GO:0005829">
    <property type="term" value="C:cytosol"/>
    <property type="evidence" value="ECO:0007669"/>
    <property type="project" value="TreeGrafter"/>
</dbReference>
<dbReference type="GO" id="GO:0004731">
    <property type="term" value="F:purine-nucleoside phosphorylase activity"/>
    <property type="evidence" value="ECO:0007669"/>
    <property type="project" value="UniProtKB-UniRule"/>
</dbReference>
<dbReference type="GO" id="GO:0006152">
    <property type="term" value="P:purine nucleoside catabolic process"/>
    <property type="evidence" value="ECO:0007669"/>
    <property type="project" value="TreeGrafter"/>
</dbReference>
<dbReference type="CDD" id="cd09006">
    <property type="entry name" value="PNP_EcPNPI-like"/>
    <property type="match status" value="1"/>
</dbReference>
<dbReference type="Gene3D" id="3.40.50.1580">
    <property type="entry name" value="Nucleoside phosphorylase domain"/>
    <property type="match status" value="1"/>
</dbReference>
<dbReference type="HAMAP" id="MF_01627">
    <property type="entry name" value="Pur_nucleosid_phosp"/>
    <property type="match status" value="1"/>
</dbReference>
<dbReference type="InterPro" id="IPR004402">
    <property type="entry name" value="DeoD-type"/>
</dbReference>
<dbReference type="InterPro" id="IPR000845">
    <property type="entry name" value="Nucleoside_phosphorylase_d"/>
</dbReference>
<dbReference type="InterPro" id="IPR035994">
    <property type="entry name" value="Nucleoside_phosphorylase_sf"/>
</dbReference>
<dbReference type="NCBIfam" id="TIGR00107">
    <property type="entry name" value="deoD"/>
    <property type="match status" value="1"/>
</dbReference>
<dbReference type="NCBIfam" id="NF004489">
    <property type="entry name" value="PRK05819.1"/>
    <property type="match status" value="1"/>
</dbReference>
<dbReference type="PANTHER" id="PTHR43691:SF11">
    <property type="entry name" value="FI09636P-RELATED"/>
    <property type="match status" value="1"/>
</dbReference>
<dbReference type="PANTHER" id="PTHR43691">
    <property type="entry name" value="URIDINE PHOSPHORYLASE"/>
    <property type="match status" value="1"/>
</dbReference>
<dbReference type="Pfam" id="PF01048">
    <property type="entry name" value="PNP_UDP_1"/>
    <property type="match status" value="1"/>
</dbReference>
<dbReference type="SUPFAM" id="SSF53167">
    <property type="entry name" value="Purine and uridine phosphorylases"/>
    <property type="match status" value="1"/>
</dbReference>
<name>DEOD_LACCB</name>
<feature type="chain" id="PRO_1000186207" description="Purine nucleoside phosphorylase DeoD-type">
    <location>
        <begin position="1"/>
        <end position="238"/>
    </location>
</feature>
<feature type="binding site" evidence="1">
    <location>
        <position position="4"/>
    </location>
    <ligand>
        <name>a purine D-ribonucleoside</name>
        <dbReference type="ChEBI" id="CHEBI:142355"/>
        <note>ligand shared between dimeric partners</note>
    </ligand>
</feature>
<feature type="binding site" description="in other chain" evidence="1">
    <location>
        <position position="20"/>
    </location>
    <ligand>
        <name>phosphate</name>
        <dbReference type="ChEBI" id="CHEBI:43474"/>
        <note>ligand shared between dimeric partners</note>
    </ligand>
</feature>
<feature type="binding site" description="in other chain" evidence="1">
    <location>
        <position position="24"/>
    </location>
    <ligand>
        <name>phosphate</name>
        <dbReference type="ChEBI" id="CHEBI:43474"/>
        <note>ligand shared between dimeric partners</note>
    </ligand>
</feature>
<feature type="binding site" evidence="1">
    <location>
        <position position="43"/>
    </location>
    <ligand>
        <name>phosphate</name>
        <dbReference type="ChEBI" id="CHEBI:43474"/>
        <note>ligand shared between dimeric partners</note>
    </ligand>
</feature>
<feature type="binding site" description="in other chain" evidence="1">
    <location>
        <begin position="87"/>
        <end position="90"/>
    </location>
    <ligand>
        <name>phosphate</name>
        <dbReference type="ChEBI" id="CHEBI:43474"/>
        <note>ligand shared between dimeric partners</note>
    </ligand>
</feature>
<feature type="binding site" description="in other chain" evidence="1">
    <location>
        <begin position="179"/>
        <end position="181"/>
    </location>
    <ligand>
        <name>a purine D-ribonucleoside</name>
        <dbReference type="ChEBI" id="CHEBI:142355"/>
        <note>ligand shared between dimeric partners</note>
    </ligand>
</feature>
<feature type="binding site" description="in other chain" evidence="1">
    <location>
        <begin position="203"/>
        <end position="204"/>
    </location>
    <ligand>
        <name>a purine D-ribonucleoside</name>
        <dbReference type="ChEBI" id="CHEBI:142355"/>
        <note>ligand shared between dimeric partners</note>
    </ligand>
</feature>
<feature type="site" description="Important for catalytic activity" evidence="2">
    <location>
        <position position="217"/>
    </location>
</feature>
<gene>
    <name evidence="2" type="primary">deoD</name>
    <name type="ordered locus">LCABL_02760</name>
</gene>
<reference key="1">
    <citation type="submission" date="2008-06" db="EMBL/GenBank/DDBJ databases">
        <title>Lactobacillus casei BL23 complete genome sequence.</title>
        <authorList>
            <person name="Maze A."/>
            <person name="Boel G."/>
            <person name="Bourand A."/>
            <person name="Loux V."/>
            <person name="Gibrat J.F."/>
            <person name="Zuniga M."/>
            <person name="Hartke A."/>
            <person name="Deutscher J."/>
        </authorList>
    </citation>
    <scope>NUCLEOTIDE SEQUENCE [LARGE SCALE GENOMIC DNA]</scope>
    <source>
        <strain>BL23</strain>
    </source>
</reference>
<evidence type="ECO:0000250" key="1">
    <source>
        <dbReference type="UniProtKB" id="P50389"/>
    </source>
</evidence>
<evidence type="ECO:0000255" key="2">
    <source>
        <dbReference type="HAMAP-Rule" id="MF_01627"/>
    </source>
</evidence>